<proteinExistence type="inferred from homology"/>
<evidence type="ECO:0000255" key="1">
    <source>
        <dbReference type="HAMAP-Rule" id="MF_00033"/>
    </source>
</evidence>
<organism>
    <name type="scientific">Salmonella paratyphi B (strain ATCC BAA-1250 / SPB7)</name>
    <dbReference type="NCBI Taxonomy" id="1016998"/>
    <lineage>
        <taxon>Bacteria</taxon>
        <taxon>Pseudomonadati</taxon>
        <taxon>Pseudomonadota</taxon>
        <taxon>Gammaproteobacteria</taxon>
        <taxon>Enterobacterales</taxon>
        <taxon>Enterobacteriaceae</taxon>
        <taxon>Salmonella</taxon>
    </lineage>
</organism>
<reference key="1">
    <citation type="submission" date="2007-11" db="EMBL/GenBank/DDBJ databases">
        <authorList>
            <consortium name="The Salmonella enterica serovar Paratyphi B Genome Sequencing Project"/>
            <person name="McClelland M."/>
            <person name="Sanderson E.K."/>
            <person name="Porwollik S."/>
            <person name="Spieth J."/>
            <person name="Clifton W.S."/>
            <person name="Fulton R."/>
            <person name="Cordes M."/>
            <person name="Wollam A."/>
            <person name="Shah N."/>
            <person name="Pepin K."/>
            <person name="Bhonagiri V."/>
            <person name="Nash W."/>
            <person name="Johnson M."/>
            <person name="Thiruvilangam P."/>
            <person name="Wilson R."/>
        </authorList>
    </citation>
    <scope>NUCLEOTIDE SEQUENCE [LARGE SCALE GENOMIC DNA]</scope>
    <source>
        <strain>ATCC BAA-1250 / SPB7</strain>
    </source>
</reference>
<sequence>MSGQPKRLMVMAGGTGGHVFPGLAVAHHLMAQGWQVRWLGTADRMEADLVPKHGIDIDFIRISGLRGKGVKALLAAPLRIFNAWRQARAIMKRFKPDVVLGMGGYVSGPGGLAAWSLGIPVVLHEQNGIAGLTNQWLAKIATTVMQAFPGAFPNAEVVGNPVRTDVLALPLPQVRLAGRDGPIRVLVVGGSQGARVLNQTMPQVAARLGDTVTIWHQSGKGAQLTVEQAYAGAGQPQHKVTEFIDDMAAAYAWADVVVCRSGALTVSEIAAAGLPAIFVPFQHKDRQQYWNALPLENAGAAKIFEQPQFTVEAVADTLAGWSREALLTMAERARAVSIPDATERVASEVSRVART</sequence>
<comment type="function">
    <text evidence="1">Cell wall formation. Catalyzes the transfer of a GlcNAc subunit on undecaprenyl-pyrophosphoryl-MurNAc-pentapeptide (lipid intermediate I) to form undecaprenyl-pyrophosphoryl-MurNAc-(pentapeptide)GlcNAc (lipid intermediate II).</text>
</comment>
<comment type="catalytic activity">
    <reaction evidence="1">
        <text>di-trans,octa-cis-undecaprenyl diphospho-N-acetyl-alpha-D-muramoyl-L-alanyl-D-glutamyl-meso-2,6-diaminopimeloyl-D-alanyl-D-alanine + UDP-N-acetyl-alpha-D-glucosamine = di-trans,octa-cis-undecaprenyl diphospho-[N-acetyl-alpha-D-glucosaminyl-(1-&gt;4)]-N-acetyl-alpha-D-muramoyl-L-alanyl-D-glutamyl-meso-2,6-diaminopimeloyl-D-alanyl-D-alanine + UDP + H(+)</text>
        <dbReference type="Rhea" id="RHEA:31227"/>
        <dbReference type="ChEBI" id="CHEBI:15378"/>
        <dbReference type="ChEBI" id="CHEBI:57705"/>
        <dbReference type="ChEBI" id="CHEBI:58223"/>
        <dbReference type="ChEBI" id="CHEBI:61387"/>
        <dbReference type="ChEBI" id="CHEBI:61388"/>
        <dbReference type="EC" id="2.4.1.227"/>
    </reaction>
</comment>
<comment type="pathway">
    <text evidence="1">Cell wall biogenesis; peptidoglycan biosynthesis.</text>
</comment>
<comment type="subcellular location">
    <subcellularLocation>
        <location evidence="1">Cell inner membrane</location>
        <topology evidence="1">Peripheral membrane protein</topology>
        <orientation evidence="1">Cytoplasmic side</orientation>
    </subcellularLocation>
</comment>
<comment type="similarity">
    <text evidence="1">Belongs to the glycosyltransferase 28 family. MurG subfamily.</text>
</comment>
<name>MURG_SALPB</name>
<accession>A9MZL9</accession>
<protein>
    <recommendedName>
        <fullName evidence="1">UDP-N-acetylglucosamine--N-acetylmuramyl-(pentapeptide) pyrophosphoryl-undecaprenol N-acetylglucosamine transferase</fullName>
        <ecNumber evidence="1">2.4.1.227</ecNumber>
    </recommendedName>
    <alternativeName>
        <fullName evidence="1">Undecaprenyl-PP-MurNAc-pentapeptide-UDPGlcNAc GlcNAc transferase</fullName>
    </alternativeName>
</protein>
<gene>
    <name evidence="1" type="primary">murG</name>
    <name type="ordered locus">SPAB_00162</name>
</gene>
<dbReference type="EC" id="2.4.1.227" evidence="1"/>
<dbReference type="EMBL" id="CP000886">
    <property type="protein sequence ID" value="ABX65604.1"/>
    <property type="molecule type" value="Genomic_DNA"/>
</dbReference>
<dbReference type="RefSeq" id="WP_000016613.1">
    <property type="nucleotide sequence ID" value="NC_010102.1"/>
</dbReference>
<dbReference type="SMR" id="A9MZL9"/>
<dbReference type="CAZy" id="GT28">
    <property type="family name" value="Glycosyltransferase Family 28"/>
</dbReference>
<dbReference type="KEGG" id="spq:SPAB_00162"/>
<dbReference type="PATRIC" id="fig|1016998.12.peg.154"/>
<dbReference type="HOGENOM" id="CLU_037404_2_0_6"/>
<dbReference type="BioCyc" id="SENT1016998:SPAB_RS00640-MONOMER"/>
<dbReference type="UniPathway" id="UPA00219"/>
<dbReference type="Proteomes" id="UP000008556">
    <property type="component" value="Chromosome"/>
</dbReference>
<dbReference type="GO" id="GO:0005886">
    <property type="term" value="C:plasma membrane"/>
    <property type="evidence" value="ECO:0007669"/>
    <property type="project" value="UniProtKB-SubCell"/>
</dbReference>
<dbReference type="GO" id="GO:0051991">
    <property type="term" value="F:UDP-N-acetyl-D-glucosamine:N-acetylmuramoyl-L-alanyl-D-glutamyl-meso-2,6-diaminopimelyl-D-alanyl-D-alanine-diphosphoundecaprenol 4-beta-N-acetylglucosaminlytransferase activity"/>
    <property type="evidence" value="ECO:0007669"/>
    <property type="project" value="RHEA"/>
</dbReference>
<dbReference type="GO" id="GO:0050511">
    <property type="term" value="F:undecaprenyldiphospho-muramoylpentapeptide beta-N-acetylglucosaminyltransferase activity"/>
    <property type="evidence" value="ECO:0007669"/>
    <property type="project" value="UniProtKB-UniRule"/>
</dbReference>
<dbReference type="GO" id="GO:0005975">
    <property type="term" value="P:carbohydrate metabolic process"/>
    <property type="evidence" value="ECO:0007669"/>
    <property type="project" value="InterPro"/>
</dbReference>
<dbReference type="GO" id="GO:0051301">
    <property type="term" value="P:cell division"/>
    <property type="evidence" value="ECO:0007669"/>
    <property type="project" value="UniProtKB-KW"/>
</dbReference>
<dbReference type="GO" id="GO:0071555">
    <property type="term" value="P:cell wall organization"/>
    <property type="evidence" value="ECO:0007669"/>
    <property type="project" value="UniProtKB-KW"/>
</dbReference>
<dbReference type="GO" id="GO:0030259">
    <property type="term" value="P:lipid glycosylation"/>
    <property type="evidence" value="ECO:0007669"/>
    <property type="project" value="UniProtKB-UniRule"/>
</dbReference>
<dbReference type="GO" id="GO:0009252">
    <property type="term" value="P:peptidoglycan biosynthetic process"/>
    <property type="evidence" value="ECO:0007669"/>
    <property type="project" value="UniProtKB-UniRule"/>
</dbReference>
<dbReference type="GO" id="GO:0008360">
    <property type="term" value="P:regulation of cell shape"/>
    <property type="evidence" value="ECO:0007669"/>
    <property type="project" value="UniProtKB-KW"/>
</dbReference>
<dbReference type="CDD" id="cd03785">
    <property type="entry name" value="GT28_MurG"/>
    <property type="match status" value="1"/>
</dbReference>
<dbReference type="FunFam" id="3.40.50.2000:FF:000016">
    <property type="entry name" value="UDP-N-acetylglucosamine--N-acetylmuramyl-(pentapeptide) pyrophosphoryl-undecaprenol N-acetylglucosamine transferase"/>
    <property type="match status" value="1"/>
</dbReference>
<dbReference type="FunFam" id="3.40.50.2000:FF:000018">
    <property type="entry name" value="UDP-N-acetylglucosamine--N-acetylmuramyl-(pentapeptide) pyrophosphoryl-undecaprenol N-acetylglucosamine transferase"/>
    <property type="match status" value="1"/>
</dbReference>
<dbReference type="Gene3D" id="3.40.50.2000">
    <property type="entry name" value="Glycogen Phosphorylase B"/>
    <property type="match status" value="2"/>
</dbReference>
<dbReference type="HAMAP" id="MF_00033">
    <property type="entry name" value="MurG"/>
    <property type="match status" value="1"/>
</dbReference>
<dbReference type="InterPro" id="IPR006009">
    <property type="entry name" value="GlcNAc_MurG"/>
</dbReference>
<dbReference type="InterPro" id="IPR007235">
    <property type="entry name" value="Glyco_trans_28_C"/>
</dbReference>
<dbReference type="InterPro" id="IPR004276">
    <property type="entry name" value="GlycoTrans_28_N"/>
</dbReference>
<dbReference type="NCBIfam" id="TIGR01133">
    <property type="entry name" value="murG"/>
    <property type="match status" value="1"/>
</dbReference>
<dbReference type="PANTHER" id="PTHR21015:SF22">
    <property type="entry name" value="GLYCOSYLTRANSFERASE"/>
    <property type="match status" value="1"/>
</dbReference>
<dbReference type="PANTHER" id="PTHR21015">
    <property type="entry name" value="UDP-N-ACETYLGLUCOSAMINE--N-ACETYLMURAMYL-(PENTAPEPTIDE) PYROPHOSPHORYL-UNDECAPRENOL N-ACETYLGLUCOSAMINE TRANSFERASE 1"/>
    <property type="match status" value="1"/>
</dbReference>
<dbReference type="Pfam" id="PF04101">
    <property type="entry name" value="Glyco_tran_28_C"/>
    <property type="match status" value="1"/>
</dbReference>
<dbReference type="Pfam" id="PF03033">
    <property type="entry name" value="Glyco_transf_28"/>
    <property type="match status" value="1"/>
</dbReference>
<dbReference type="SUPFAM" id="SSF53756">
    <property type="entry name" value="UDP-Glycosyltransferase/glycogen phosphorylase"/>
    <property type="match status" value="1"/>
</dbReference>
<keyword id="KW-0131">Cell cycle</keyword>
<keyword id="KW-0132">Cell division</keyword>
<keyword id="KW-0997">Cell inner membrane</keyword>
<keyword id="KW-1003">Cell membrane</keyword>
<keyword id="KW-0133">Cell shape</keyword>
<keyword id="KW-0961">Cell wall biogenesis/degradation</keyword>
<keyword id="KW-0328">Glycosyltransferase</keyword>
<keyword id="KW-0472">Membrane</keyword>
<keyword id="KW-0573">Peptidoglycan synthesis</keyword>
<keyword id="KW-0808">Transferase</keyword>
<feature type="chain" id="PRO_1000074468" description="UDP-N-acetylglucosamine--N-acetylmuramyl-(pentapeptide) pyrophosphoryl-undecaprenol N-acetylglucosamine transferase">
    <location>
        <begin position="1"/>
        <end position="355"/>
    </location>
</feature>
<feature type="binding site" evidence="1">
    <location>
        <begin position="15"/>
        <end position="17"/>
    </location>
    <ligand>
        <name>UDP-N-acetyl-alpha-D-glucosamine</name>
        <dbReference type="ChEBI" id="CHEBI:57705"/>
    </ligand>
</feature>
<feature type="binding site" evidence="1">
    <location>
        <position position="127"/>
    </location>
    <ligand>
        <name>UDP-N-acetyl-alpha-D-glucosamine</name>
        <dbReference type="ChEBI" id="CHEBI:57705"/>
    </ligand>
</feature>
<feature type="binding site" evidence="1">
    <location>
        <position position="163"/>
    </location>
    <ligand>
        <name>UDP-N-acetyl-alpha-D-glucosamine</name>
        <dbReference type="ChEBI" id="CHEBI:57705"/>
    </ligand>
</feature>
<feature type="binding site" evidence="1">
    <location>
        <position position="191"/>
    </location>
    <ligand>
        <name>UDP-N-acetyl-alpha-D-glucosamine</name>
        <dbReference type="ChEBI" id="CHEBI:57705"/>
    </ligand>
</feature>
<feature type="binding site" evidence="1">
    <location>
        <position position="244"/>
    </location>
    <ligand>
        <name>UDP-N-acetyl-alpha-D-glucosamine</name>
        <dbReference type="ChEBI" id="CHEBI:57705"/>
    </ligand>
</feature>
<feature type="binding site" evidence="1">
    <location>
        <begin position="263"/>
        <end position="268"/>
    </location>
    <ligand>
        <name>UDP-N-acetyl-alpha-D-glucosamine</name>
        <dbReference type="ChEBI" id="CHEBI:57705"/>
    </ligand>
</feature>
<feature type="binding site" evidence="1">
    <location>
        <position position="288"/>
    </location>
    <ligand>
        <name>UDP-N-acetyl-alpha-D-glucosamine</name>
        <dbReference type="ChEBI" id="CHEBI:57705"/>
    </ligand>
</feature>